<gene>
    <name evidence="1" type="primary">glmU</name>
    <name type="ordered locus">swp_5151</name>
</gene>
<evidence type="ECO:0000255" key="1">
    <source>
        <dbReference type="HAMAP-Rule" id="MF_01631"/>
    </source>
</evidence>
<name>GLMU_SHEPW</name>
<protein>
    <recommendedName>
        <fullName evidence="1">Bifunctional protein GlmU</fullName>
    </recommendedName>
    <domain>
        <recommendedName>
            <fullName evidence="1">UDP-N-acetylglucosamine pyrophosphorylase</fullName>
            <ecNumber evidence="1">2.7.7.23</ecNumber>
        </recommendedName>
        <alternativeName>
            <fullName evidence="1">N-acetylglucosamine-1-phosphate uridyltransferase</fullName>
        </alternativeName>
    </domain>
    <domain>
        <recommendedName>
            <fullName evidence="1">Glucosamine-1-phosphate N-acetyltransferase</fullName>
            <ecNumber evidence="1">2.3.1.157</ecNumber>
        </recommendedName>
    </domain>
</protein>
<keyword id="KW-0012">Acyltransferase</keyword>
<keyword id="KW-0133">Cell shape</keyword>
<keyword id="KW-0961">Cell wall biogenesis/degradation</keyword>
<keyword id="KW-0963">Cytoplasm</keyword>
<keyword id="KW-0460">Magnesium</keyword>
<keyword id="KW-0479">Metal-binding</keyword>
<keyword id="KW-0511">Multifunctional enzyme</keyword>
<keyword id="KW-0548">Nucleotidyltransferase</keyword>
<keyword id="KW-0573">Peptidoglycan synthesis</keyword>
<keyword id="KW-0677">Repeat</keyword>
<keyword id="KW-0808">Transferase</keyword>
<comment type="function">
    <text evidence="1">Catalyzes the last two sequential reactions in the de novo biosynthetic pathway for UDP-N-acetylglucosamine (UDP-GlcNAc). The C-terminal domain catalyzes the transfer of acetyl group from acetyl coenzyme A to glucosamine-1-phosphate (GlcN-1-P) to produce N-acetylglucosamine-1-phosphate (GlcNAc-1-P), which is converted into UDP-GlcNAc by the transfer of uridine 5-monophosphate (from uridine 5-triphosphate), a reaction catalyzed by the N-terminal domain.</text>
</comment>
<comment type="catalytic activity">
    <reaction evidence="1">
        <text>alpha-D-glucosamine 1-phosphate + acetyl-CoA = N-acetyl-alpha-D-glucosamine 1-phosphate + CoA + H(+)</text>
        <dbReference type="Rhea" id="RHEA:13725"/>
        <dbReference type="ChEBI" id="CHEBI:15378"/>
        <dbReference type="ChEBI" id="CHEBI:57287"/>
        <dbReference type="ChEBI" id="CHEBI:57288"/>
        <dbReference type="ChEBI" id="CHEBI:57776"/>
        <dbReference type="ChEBI" id="CHEBI:58516"/>
        <dbReference type="EC" id="2.3.1.157"/>
    </reaction>
</comment>
<comment type="catalytic activity">
    <reaction evidence="1">
        <text>N-acetyl-alpha-D-glucosamine 1-phosphate + UTP + H(+) = UDP-N-acetyl-alpha-D-glucosamine + diphosphate</text>
        <dbReference type="Rhea" id="RHEA:13509"/>
        <dbReference type="ChEBI" id="CHEBI:15378"/>
        <dbReference type="ChEBI" id="CHEBI:33019"/>
        <dbReference type="ChEBI" id="CHEBI:46398"/>
        <dbReference type="ChEBI" id="CHEBI:57705"/>
        <dbReference type="ChEBI" id="CHEBI:57776"/>
        <dbReference type="EC" id="2.7.7.23"/>
    </reaction>
</comment>
<comment type="cofactor">
    <cofactor evidence="1">
        <name>Mg(2+)</name>
        <dbReference type="ChEBI" id="CHEBI:18420"/>
    </cofactor>
    <text evidence="1">Binds 1 Mg(2+) ion per subunit.</text>
</comment>
<comment type="pathway">
    <text evidence="1">Nucleotide-sugar biosynthesis; UDP-N-acetyl-alpha-D-glucosamine biosynthesis; N-acetyl-alpha-D-glucosamine 1-phosphate from alpha-D-glucosamine 6-phosphate (route II): step 2/2.</text>
</comment>
<comment type="pathway">
    <text evidence="1">Nucleotide-sugar biosynthesis; UDP-N-acetyl-alpha-D-glucosamine biosynthesis; UDP-N-acetyl-alpha-D-glucosamine from N-acetyl-alpha-D-glucosamine 1-phosphate: step 1/1.</text>
</comment>
<comment type="pathway">
    <text evidence="1">Bacterial outer membrane biogenesis; LPS lipid A biosynthesis.</text>
</comment>
<comment type="subunit">
    <text evidence="1">Homotrimer.</text>
</comment>
<comment type="subcellular location">
    <subcellularLocation>
        <location evidence="1">Cytoplasm</location>
    </subcellularLocation>
</comment>
<comment type="similarity">
    <text evidence="1">In the N-terminal section; belongs to the N-acetylglucosamine-1-phosphate uridyltransferase family.</text>
</comment>
<comment type="similarity">
    <text evidence="1">In the C-terminal section; belongs to the transferase hexapeptide repeat family.</text>
</comment>
<sequence>MALNVVILAAGKGTRMRSDLPKVLHPIAHKSMVQHVIDTAHEVGSDAIQLVYGYGADKLQAKLGEQQLNWVLQAEQLGTGHAVAQANDNISDDDTVLILYGDVPLIQASTLESLLAVRDENGLAILTVNLPNPMGYGRIVREDNKVVGIVEQKDANAEQLAISEINTGIMAAPGKQLKAWLGQLSSDNAQGEYYLTDIVAMAHKDGVAITTAQPESAVEVEGANNRVQLAQLERAYQARAAEKLMLEGANLRDPARIDIRGDVSVGMDVMIDVNVVIEGTVNIGNNVTIGAGAILIDCDIADNAEIKPYSIVENAKVGVKASAGPFARLRPGAELAEDAHIGNFVEMKKALLGKGSKAGHLAYIGDATIGCGVNIGAGTITCNYDGANKFQTIIEDNVFVGSDTQLVAPITIGKGATLGAGSTITKDVAADELVITRVKQRHISGWARPVKKAK</sequence>
<dbReference type="EC" id="2.7.7.23" evidence="1"/>
<dbReference type="EC" id="2.3.1.157" evidence="1"/>
<dbReference type="EMBL" id="CP000472">
    <property type="protein sequence ID" value="ACJ31766.1"/>
    <property type="molecule type" value="Genomic_DNA"/>
</dbReference>
<dbReference type="RefSeq" id="WP_020915090.1">
    <property type="nucleotide sequence ID" value="NC_011566.1"/>
</dbReference>
<dbReference type="SMR" id="B8CVU0"/>
<dbReference type="STRING" id="225849.swp_5151"/>
<dbReference type="KEGG" id="swp:swp_5151"/>
<dbReference type="eggNOG" id="COG1207">
    <property type="taxonomic scope" value="Bacteria"/>
</dbReference>
<dbReference type="HOGENOM" id="CLU_029499_15_2_6"/>
<dbReference type="OrthoDB" id="9775031at2"/>
<dbReference type="UniPathway" id="UPA00113">
    <property type="reaction ID" value="UER00532"/>
</dbReference>
<dbReference type="UniPathway" id="UPA00113">
    <property type="reaction ID" value="UER00533"/>
</dbReference>
<dbReference type="UniPathway" id="UPA00973"/>
<dbReference type="Proteomes" id="UP000000753">
    <property type="component" value="Chromosome"/>
</dbReference>
<dbReference type="GO" id="GO:0005737">
    <property type="term" value="C:cytoplasm"/>
    <property type="evidence" value="ECO:0007669"/>
    <property type="project" value="UniProtKB-SubCell"/>
</dbReference>
<dbReference type="GO" id="GO:0016020">
    <property type="term" value="C:membrane"/>
    <property type="evidence" value="ECO:0007669"/>
    <property type="project" value="GOC"/>
</dbReference>
<dbReference type="GO" id="GO:0019134">
    <property type="term" value="F:glucosamine-1-phosphate N-acetyltransferase activity"/>
    <property type="evidence" value="ECO:0007669"/>
    <property type="project" value="UniProtKB-UniRule"/>
</dbReference>
<dbReference type="GO" id="GO:0000287">
    <property type="term" value="F:magnesium ion binding"/>
    <property type="evidence" value="ECO:0007669"/>
    <property type="project" value="UniProtKB-UniRule"/>
</dbReference>
<dbReference type="GO" id="GO:0003977">
    <property type="term" value="F:UDP-N-acetylglucosamine diphosphorylase activity"/>
    <property type="evidence" value="ECO:0007669"/>
    <property type="project" value="UniProtKB-UniRule"/>
</dbReference>
<dbReference type="GO" id="GO:0000902">
    <property type="term" value="P:cell morphogenesis"/>
    <property type="evidence" value="ECO:0007669"/>
    <property type="project" value="UniProtKB-UniRule"/>
</dbReference>
<dbReference type="GO" id="GO:0071555">
    <property type="term" value="P:cell wall organization"/>
    <property type="evidence" value="ECO:0007669"/>
    <property type="project" value="UniProtKB-KW"/>
</dbReference>
<dbReference type="GO" id="GO:0009245">
    <property type="term" value="P:lipid A biosynthetic process"/>
    <property type="evidence" value="ECO:0007669"/>
    <property type="project" value="UniProtKB-UniRule"/>
</dbReference>
<dbReference type="GO" id="GO:0009252">
    <property type="term" value="P:peptidoglycan biosynthetic process"/>
    <property type="evidence" value="ECO:0007669"/>
    <property type="project" value="UniProtKB-UniRule"/>
</dbReference>
<dbReference type="GO" id="GO:0008360">
    <property type="term" value="P:regulation of cell shape"/>
    <property type="evidence" value="ECO:0007669"/>
    <property type="project" value="UniProtKB-KW"/>
</dbReference>
<dbReference type="GO" id="GO:0006048">
    <property type="term" value="P:UDP-N-acetylglucosamine biosynthetic process"/>
    <property type="evidence" value="ECO:0007669"/>
    <property type="project" value="UniProtKB-UniPathway"/>
</dbReference>
<dbReference type="CDD" id="cd02540">
    <property type="entry name" value="GT2_GlmU_N_bac"/>
    <property type="match status" value="1"/>
</dbReference>
<dbReference type="CDD" id="cd03353">
    <property type="entry name" value="LbH_GlmU_C"/>
    <property type="match status" value="1"/>
</dbReference>
<dbReference type="Gene3D" id="2.160.10.10">
    <property type="entry name" value="Hexapeptide repeat proteins"/>
    <property type="match status" value="1"/>
</dbReference>
<dbReference type="Gene3D" id="3.90.550.10">
    <property type="entry name" value="Spore Coat Polysaccharide Biosynthesis Protein SpsA, Chain A"/>
    <property type="match status" value="1"/>
</dbReference>
<dbReference type="HAMAP" id="MF_01631">
    <property type="entry name" value="GlmU"/>
    <property type="match status" value="1"/>
</dbReference>
<dbReference type="InterPro" id="IPR005882">
    <property type="entry name" value="Bifunctional_GlmU"/>
</dbReference>
<dbReference type="InterPro" id="IPR050065">
    <property type="entry name" value="GlmU-like"/>
</dbReference>
<dbReference type="InterPro" id="IPR038009">
    <property type="entry name" value="GlmU_C_LbH"/>
</dbReference>
<dbReference type="InterPro" id="IPR001451">
    <property type="entry name" value="Hexapep"/>
</dbReference>
<dbReference type="InterPro" id="IPR018357">
    <property type="entry name" value="Hexapep_transf_CS"/>
</dbReference>
<dbReference type="InterPro" id="IPR025877">
    <property type="entry name" value="MobA-like_NTP_Trfase"/>
</dbReference>
<dbReference type="InterPro" id="IPR029044">
    <property type="entry name" value="Nucleotide-diphossugar_trans"/>
</dbReference>
<dbReference type="InterPro" id="IPR011004">
    <property type="entry name" value="Trimer_LpxA-like_sf"/>
</dbReference>
<dbReference type="NCBIfam" id="TIGR01173">
    <property type="entry name" value="glmU"/>
    <property type="match status" value="1"/>
</dbReference>
<dbReference type="NCBIfam" id="NF006986">
    <property type="entry name" value="PRK09451.1"/>
    <property type="match status" value="1"/>
</dbReference>
<dbReference type="PANTHER" id="PTHR43584:SF3">
    <property type="entry name" value="BIFUNCTIONAL PROTEIN GLMU"/>
    <property type="match status" value="1"/>
</dbReference>
<dbReference type="PANTHER" id="PTHR43584">
    <property type="entry name" value="NUCLEOTIDYL TRANSFERASE"/>
    <property type="match status" value="1"/>
</dbReference>
<dbReference type="Pfam" id="PF00132">
    <property type="entry name" value="Hexapep"/>
    <property type="match status" value="1"/>
</dbReference>
<dbReference type="Pfam" id="PF12804">
    <property type="entry name" value="NTP_transf_3"/>
    <property type="match status" value="1"/>
</dbReference>
<dbReference type="SUPFAM" id="SSF53448">
    <property type="entry name" value="Nucleotide-diphospho-sugar transferases"/>
    <property type="match status" value="1"/>
</dbReference>
<dbReference type="SUPFAM" id="SSF51161">
    <property type="entry name" value="Trimeric LpxA-like enzymes"/>
    <property type="match status" value="1"/>
</dbReference>
<dbReference type="PROSITE" id="PS00101">
    <property type="entry name" value="HEXAPEP_TRANSFERASES"/>
    <property type="match status" value="1"/>
</dbReference>
<accession>B8CVU0</accession>
<organism>
    <name type="scientific">Shewanella piezotolerans (strain WP3 / JCM 13877)</name>
    <dbReference type="NCBI Taxonomy" id="225849"/>
    <lineage>
        <taxon>Bacteria</taxon>
        <taxon>Pseudomonadati</taxon>
        <taxon>Pseudomonadota</taxon>
        <taxon>Gammaproteobacteria</taxon>
        <taxon>Alteromonadales</taxon>
        <taxon>Shewanellaceae</taxon>
        <taxon>Shewanella</taxon>
    </lineage>
</organism>
<feature type="chain" id="PRO_1000186489" description="Bifunctional protein GlmU">
    <location>
        <begin position="1"/>
        <end position="454"/>
    </location>
</feature>
<feature type="region of interest" description="Pyrophosphorylase" evidence="1">
    <location>
        <begin position="1"/>
        <end position="226"/>
    </location>
</feature>
<feature type="region of interest" description="Linker" evidence="1">
    <location>
        <begin position="227"/>
        <end position="247"/>
    </location>
</feature>
<feature type="region of interest" description="N-acetyltransferase" evidence="1">
    <location>
        <begin position="248"/>
        <end position="454"/>
    </location>
</feature>
<feature type="active site" description="Proton acceptor" evidence="1">
    <location>
        <position position="360"/>
    </location>
</feature>
<feature type="binding site" evidence="1">
    <location>
        <begin position="8"/>
        <end position="11"/>
    </location>
    <ligand>
        <name>UDP-N-acetyl-alpha-D-glucosamine</name>
        <dbReference type="ChEBI" id="CHEBI:57705"/>
    </ligand>
</feature>
<feature type="binding site" evidence="1">
    <location>
        <position position="22"/>
    </location>
    <ligand>
        <name>UDP-N-acetyl-alpha-D-glucosamine</name>
        <dbReference type="ChEBI" id="CHEBI:57705"/>
    </ligand>
</feature>
<feature type="binding site" evidence="1">
    <location>
        <position position="73"/>
    </location>
    <ligand>
        <name>UDP-N-acetyl-alpha-D-glucosamine</name>
        <dbReference type="ChEBI" id="CHEBI:57705"/>
    </ligand>
</feature>
<feature type="binding site" evidence="1">
    <location>
        <begin position="78"/>
        <end position="79"/>
    </location>
    <ligand>
        <name>UDP-N-acetyl-alpha-D-glucosamine</name>
        <dbReference type="ChEBI" id="CHEBI:57705"/>
    </ligand>
</feature>
<feature type="binding site" evidence="1">
    <location>
        <begin position="100"/>
        <end position="102"/>
    </location>
    <ligand>
        <name>UDP-N-acetyl-alpha-D-glucosamine</name>
        <dbReference type="ChEBI" id="CHEBI:57705"/>
    </ligand>
</feature>
<feature type="binding site" evidence="1">
    <location>
        <position position="102"/>
    </location>
    <ligand>
        <name>Mg(2+)</name>
        <dbReference type="ChEBI" id="CHEBI:18420"/>
    </ligand>
</feature>
<feature type="binding site" evidence="1">
    <location>
        <position position="137"/>
    </location>
    <ligand>
        <name>UDP-N-acetyl-alpha-D-glucosamine</name>
        <dbReference type="ChEBI" id="CHEBI:57705"/>
    </ligand>
</feature>
<feature type="binding site" evidence="1">
    <location>
        <position position="151"/>
    </location>
    <ligand>
        <name>UDP-N-acetyl-alpha-D-glucosamine</name>
        <dbReference type="ChEBI" id="CHEBI:57705"/>
    </ligand>
</feature>
<feature type="binding site" evidence="1">
    <location>
        <position position="166"/>
    </location>
    <ligand>
        <name>UDP-N-acetyl-alpha-D-glucosamine</name>
        <dbReference type="ChEBI" id="CHEBI:57705"/>
    </ligand>
</feature>
<feature type="binding site" evidence="1">
    <location>
        <position position="224"/>
    </location>
    <ligand>
        <name>Mg(2+)</name>
        <dbReference type="ChEBI" id="CHEBI:18420"/>
    </ligand>
</feature>
<feature type="binding site" evidence="1">
    <location>
        <position position="224"/>
    </location>
    <ligand>
        <name>UDP-N-acetyl-alpha-D-glucosamine</name>
        <dbReference type="ChEBI" id="CHEBI:57705"/>
    </ligand>
</feature>
<feature type="binding site" evidence="1">
    <location>
        <position position="330"/>
    </location>
    <ligand>
        <name>UDP-N-acetyl-alpha-D-glucosamine</name>
        <dbReference type="ChEBI" id="CHEBI:57705"/>
    </ligand>
</feature>
<feature type="binding site" evidence="1">
    <location>
        <position position="348"/>
    </location>
    <ligand>
        <name>UDP-N-acetyl-alpha-D-glucosamine</name>
        <dbReference type="ChEBI" id="CHEBI:57705"/>
    </ligand>
</feature>
<feature type="binding site" evidence="1">
    <location>
        <position position="363"/>
    </location>
    <ligand>
        <name>UDP-N-acetyl-alpha-D-glucosamine</name>
        <dbReference type="ChEBI" id="CHEBI:57705"/>
    </ligand>
</feature>
<feature type="binding site" evidence="1">
    <location>
        <position position="374"/>
    </location>
    <ligand>
        <name>UDP-N-acetyl-alpha-D-glucosamine</name>
        <dbReference type="ChEBI" id="CHEBI:57705"/>
    </ligand>
</feature>
<feature type="binding site" evidence="1">
    <location>
        <position position="377"/>
    </location>
    <ligand>
        <name>acetyl-CoA</name>
        <dbReference type="ChEBI" id="CHEBI:57288"/>
    </ligand>
</feature>
<feature type="binding site" evidence="1">
    <location>
        <begin position="383"/>
        <end position="384"/>
    </location>
    <ligand>
        <name>acetyl-CoA</name>
        <dbReference type="ChEBI" id="CHEBI:57288"/>
    </ligand>
</feature>
<feature type="binding site" evidence="1">
    <location>
        <position position="402"/>
    </location>
    <ligand>
        <name>acetyl-CoA</name>
        <dbReference type="ChEBI" id="CHEBI:57288"/>
    </ligand>
</feature>
<feature type="binding site" evidence="1">
    <location>
        <position position="420"/>
    </location>
    <ligand>
        <name>acetyl-CoA</name>
        <dbReference type="ChEBI" id="CHEBI:57288"/>
    </ligand>
</feature>
<feature type="binding site" evidence="1">
    <location>
        <position position="437"/>
    </location>
    <ligand>
        <name>acetyl-CoA</name>
        <dbReference type="ChEBI" id="CHEBI:57288"/>
    </ligand>
</feature>
<proteinExistence type="inferred from homology"/>
<reference key="1">
    <citation type="journal article" date="2008" name="PLoS ONE">
        <title>Environmental adaptation: genomic analysis of the piezotolerant and psychrotolerant deep-sea iron reducing bacterium Shewanella piezotolerans WP3.</title>
        <authorList>
            <person name="Wang F."/>
            <person name="Wang J."/>
            <person name="Jian H."/>
            <person name="Zhang B."/>
            <person name="Li S."/>
            <person name="Wang F."/>
            <person name="Zeng X."/>
            <person name="Gao L."/>
            <person name="Bartlett D.H."/>
            <person name="Yu J."/>
            <person name="Hu S."/>
            <person name="Xiao X."/>
        </authorList>
    </citation>
    <scope>NUCLEOTIDE SEQUENCE [LARGE SCALE GENOMIC DNA]</scope>
    <source>
        <strain>WP3 / JCM 13877</strain>
    </source>
</reference>